<keyword id="KW-0150">Chloroplast</keyword>
<keyword id="KW-0934">Plastid</keyword>
<keyword id="KW-0687">Ribonucleoprotein</keyword>
<keyword id="KW-0689">Ribosomal protein</keyword>
<keyword id="KW-0694">RNA-binding</keyword>
<keyword id="KW-0699">rRNA-binding</keyword>
<feature type="chain" id="PRO_0000132596" description="Small ribosomal subunit protein uS4c">
    <location>
        <begin position="1" status="less than"/>
        <end position="195" status="greater than"/>
    </location>
</feature>
<feature type="domain" description="S4 RNA-binding">
    <location>
        <begin position="82"/>
        <end position="143"/>
    </location>
</feature>
<feature type="non-terminal residue">
    <location>
        <position position="1"/>
    </location>
</feature>
<feature type="non-terminal residue">
    <location>
        <position position="195"/>
    </location>
</feature>
<evidence type="ECO:0000250" key="1"/>
<evidence type="ECO:0000305" key="2"/>
<gene>
    <name type="primary">rps4</name>
</gene>
<organism>
    <name type="scientific">Gladiolus murielae</name>
    <name type="common">Abyssinian gladiolus</name>
    <name type="synonym">Acidanthera murielae</name>
    <dbReference type="NCBI Taxonomy" id="58994"/>
    <lineage>
        <taxon>Eukaryota</taxon>
        <taxon>Viridiplantae</taxon>
        <taxon>Streptophyta</taxon>
        <taxon>Embryophyta</taxon>
        <taxon>Tracheophyta</taxon>
        <taxon>Spermatophyta</taxon>
        <taxon>Magnoliopsida</taxon>
        <taxon>Liliopsida</taxon>
        <taxon>Asparagales</taxon>
        <taxon>Iridaceae</taxon>
        <taxon>Crocoideae</taxon>
        <taxon>Gladioleae</taxon>
        <taxon>Gladiolus</taxon>
    </lineage>
</organism>
<comment type="function">
    <text evidence="1">One of the primary rRNA binding proteins, it binds directly to 16S rRNA where it nucleates assembly of the body of the 30S subunit.</text>
</comment>
<comment type="function">
    <text evidence="1">With S5 and S12 plays an important role in translational accuracy.</text>
</comment>
<comment type="subunit">
    <text evidence="1">Part of the 30S ribosomal subunit. Contacts protein S5. The interaction surface between S4 and S5 is involved in control of translational fidelity (By similarity).</text>
</comment>
<comment type="subcellular location">
    <subcellularLocation>
        <location>Plastid</location>
        <location>Chloroplast</location>
    </subcellularLocation>
</comment>
<comment type="similarity">
    <text evidence="2">Belongs to the universal ribosomal protein uS4 family.</text>
</comment>
<geneLocation type="chloroplast"/>
<dbReference type="EMBL" id="Z68255">
    <property type="protein sequence ID" value="CAA92553.1"/>
    <property type="molecule type" value="Genomic_DNA"/>
</dbReference>
<dbReference type="SMR" id="O20219"/>
<dbReference type="GO" id="GO:0009507">
    <property type="term" value="C:chloroplast"/>
    <property type="evidence" value="ECO:0007669"/>
    <property type="project" value="UniProtKB-SubCell"/>
</dbReference>
<dbReference type="GO" id="GO:0015935">
    <property type="term" value="C:small ribosomal subunit"/>
    <property type="evidence" value="ECO:0007669"/>
    <property type="project" value="InterPro"/>
</dbReference>
<dbReference type="GO" id="GO:0019843">
    <property type="term" value="F:rRNA binding"/>
    <property type="evidence" value="ECO:0007669"/>
    <property type="project" value="UniProtKB-KW"/>
</dbReference>
<dbReference type="GO" id="GO:0003735">
    <property type="term" value="F:structural constituent of ribosome"/>
    <property type="evidence" value="ECO:0007669"/>
    <property type="project" value="InterPro"/>
</dbReference>
<dbReference type="GO" id="GO:0042274">
    <property type="term" value="P:ribosomal small subunit biogenesis"/>
    <property type="evidence" value="ECO:0007669"/>
    <property type="project" value="TreeGrafter"/>
</dbReference>
<dbReference type="GO" id="GO:0006412">
    <property type="term" value="P:translation"/>
    <property type="evidence" value="ECO:0007669"/>
    <property type="project" value="InterPro"/>
</dbReference>
<dbReference type="CDD" id="cd00165">
    <property type="entry name" value="S4"/>
    <property type="match status" value="1"/>
</dbReference>
<dbReference type="FunFam" id="1.10.1050.10:FF:000002">
    <property type="entry name" value="30S ribosomal protein S4, chloroplastic"/>
    <property type="match status" value="1"/>
</dbReference>
<dbReference type="FunFam" id="3.10.290.10:FF:000081">
    <property type="entry name" value="30S ribosomal protein S4, chloroplastic"/>
    <property type="match status" value="1"/>
</dbReference>
<dbReference type="Gene3D" id="1.10.1050.10">
    <property type="entry name" value="Ribosomal Protein S4 Delta 41, Chain A, domain 1"/>
    <property type="match status" value="1"/>
</dbReference>
<dbReference type="Gene3D" id="3.10.290.10">
    <property type="entry name" value="RNA-binding S4 domain"/>
    <property type="match status" value="1"/>
</dbReference>
<dbReference type="HAMAP" id="MF_01306_B">
    <property type="entry name" value="Ribosomal_uS4_B"/>
    <property type="match status" value="1"/>
</dbReference>
<dbReference type="InterPro" id="IPR022801">
    <property type="entry name" value="Ribosomal_uS4"/>
</dbReference>
<dbReference type="InterPro" id="IPR005709">
    <property type="entry name" value="Ribosomal_uS4_bac-type"/>
</dbReference>
<dbReference type="InterPro" id="IPR018079">
    <property type="entry name" value="Ribosomal_uS4_CS"/>
</dbReference>
<dbReference type="InterPro" id="IPR001912">
    <property type="entry name" value="Ribosomal_uS4_N"/>
</dbReference>
<dbReference type="InterPro" id="IPR002942">
    <property type="entry name" value="S4_RNA-bd"/>
</dbReference>
<dbReference type="InterPro" id="IPR036986">
    <property type="entry name" value="S4_RNA-bd_sf"/>
</dbReference>
<dbReference type="NCBIfam" id="NF003717">
    <property type="entry name" value="PRK05327.1"/>
    <property type="match status" value="1"/>
</dbReference>
<dbReference type="NCBIfam" id="TIGR01017">
    <property type="entry name" value="rpsD_bact"/>
    <property type="match status" value="1"/>
</dbReference>
<dbReference type="PANTHER" id="PTHR11831">
    <property type="entry name" value="30S 40S RIBOSOMAL PROTEIN"/>
    <property type="match status" value="1"/>
</dbReference>
<dbReference type="PANTHER" id="PTHR11831:SF4">
    <property type="entry name" value="SMALL RIBOSOMAL SUBUNIT PROTEIN US4M"/>
    <property type="match status" value="1"/>
</dbReference>
<dbReference type="Pfam" id="PF00163">
    <property type="entry name" value="Ribosomal_S4"/>
    <property type="match status" value="1"/>
</dbReference>
<dbReference type="Pfam" id="PF01479">
    <property type="entry name" value="S4"/>
    <property type="match status" value="1"/>
</dbReference>
<dbReference type="SMART" id="SM01390">
    <property type="entry name" value="Ribosomal_S4"/>
    <property type="match status" value="1"/>
</dbReference>
<dbReference type="SMART" id="SM00363">
    <property type="entry name" value="S4"/>
    <property type="match status" value="1"/>
</dbReference>
<dbReference type="SUPFAM" id="SSF55174">
    <property type="entry name" value="Alpha-L RNA-binding motif"/>
    <property type="match status" value="1"/>
</dbReference>
<dbReference type="PROSITE" id="PS00632">
    <property type="entry name" value="RIBOSOMAL_S4"/>
    <property type="match status" value="1"/>
</dbReference>
<dbReference type="PROSITE" id="PS50889">
    <property type="entry name" value="S4"/>
    <property type="match status" value="1"/>
</dbReference>
<name>RR4_GLAMU</name>
<accession>O20219</accession>
<sequence>RFKKIRRLGALPGLTSKRPRSGSDLKNQLRSGKRSQYRIRLEEKQKLRFHYGLTERQLLKYVHIAGKAKGSTGQILLQLLEMRLDNILFRLGMASTIPGARQLVNHRHILVNGRIVDIPSYRCKPRDIITTKNKQRSKALIQNFIASSPHQEELPNHLTIDPFQYKGLVNQIIDSKWIGLKINELLVVEYYSRQT</sequence>
<proteinExistence type="inferred from homology"/>
<protein>
    <recommendedName>
        <fullName evidence="2">Small ribosomal subunit protein uS4c</fullName>
    </recommendedName>
    <alternativeName>
        <fullName>30S ribosomal protein S4, chloroplastic</fullName>
    </alternativeName>
</protein>
<reference key="1">
    <citation type="journal article" date="1997" name="Plant Syst. Evol.">
        <title>Phylogenetic analysis of Iridaceae with parsimony and distance methods using the plastid gene rps4.</title>
        <authorList>
            <person name="Souza-Chies T.T."/>
            <person name="Bittar G."/>
            <person name="Nadot S."/>
            <person name="Carter L."/>
            <person name="Besin E."/>
            <person name="Lejeune B.P."/>
        </authorList>
    </citation>
    <scope>NUCLEOTIDE SEQUENCE [GENOMIC DNA]</scope>
</reference>